<reference key="1">
    <citation type="journal article" date="2005" name="FEBS Lett.">
        <title>Yeast two-hybrid screens imply that GGNBP1, GGNBP2 and OAZ3 are potential interaction partners of testicular germ cell-specific protein GGN1.</title>
        <authorList>
            <person name="Zhang J."/>
            <person name="Wang Y."/>
            <person name="Zhou Y."/>
            <person name="Cao Z."/>
            <person name="Huang P."/>
            <person name="Lu B."/>
        </authorList>
    </citation>
    <scope>NUCLEOTIDE SEQUENCE [MRNA]</scope>
    <source>
        <strain>BN/SsNHsdMCW</strain>
    </source>
</reference>
<feature type="chain" id="PRO_0000239350" description="Gametogenetin-binding protein 2">
    <location>
        <begin position="1"/>
        <end position="696"/>
    </location>
</feature>
<feature type="modified residue" description="Phosphoserine" evidence="2">
    <location>
        <position position="360"/>
    </location>
</feature>
<sequence>MARLVAVCRDGEEEFPFERRQIPLYIDDTLTMVMEFPDNVLNLDGHQNNGAQLKQFIQRHSMLKQQDLSIAMVVTSREVLSALSQLVPCVGCRRSVERLFSQLVESGNPALEPLTVGPKGVLSLTRSCMTDAKKLYTLFYVHGSKLNDMIDAIPKSKKNKRCQLHSLDTHKPKPLGGCWMDVWELMSQECRDEVVLIDSSCLLETLETYLRKHRFCTDCKNKVLRAYNILIGELDCSKEKGYCAALYEGLRCCPHERHIHVCCETDFIAHLLGRAEPEFAGGRRERHAKTIDIAQEEVLTCLGIHLYERLHRIWQKLRAEEQTWQMLFYLGVDALRKSFEMTVEKVQGISRLEQLCEEFSEEERVRELKQEKKRQKRKNRRKNKCVCDSPASLHTADEKAVSQEKETDFMENSCKACGSTEDGNTCVEVIVTNENTSCTCPSSGNLLGSPKIKKGMSPHCNGSDCGYSSSMEGSETGSREGSDVACTEGICNHDEHGEDPCVHHCEDKEDDGDSCVECWANSEENNTKGKNKKKKKKSKMLKCDEHIQKLGSCITDPGNRETSGNTMHTVFHRDKTKDAHPESCCSTEKGGQPLPWFEHRKNVPQFTEPTEMSFGPDSGKGAKSLVELLDESECTSDEEIFISQDEIQSFMANNQSFYSNREQYRQHLKEKFNKYCRLNDHKRPVCSGWLTTAGAN</sequence>
<comment type="function">
    <text evidence="1">May be involved in spermatogenesis.</text>
</comment>
<comment type="subunit">
    <text evidence="1">Interacts with GGN.</text>
</comment>
<comment type="subcellular location">
    <subcellularLocation>
        <location evidence="1">Cytoplasmic vesicle</location>
    </subcellularLocation>
    <text evidence="1">Associated with vesicular structures.</text>
</comment>
<proteinExistence type="evidence at transcript level"/>
<evidence type="ECO:0000250" key="1"/>
<evidence type="ECO:0000250" key="2">
    <source>
        <dbReference type="UniProtKB" id="Q9H3C7"/>
    </source>
</evidence>
<name>GGNB2_RAT</name>
<keyword id="KW-0968">Cytoplasmic vesicle</keyword>
<keyword id="KW-0217">Developmental protein</keyword>
<keyword id="KW-0221">Differentiation</keyword>
<keyword id="KW-0597">Phosphoprotein</keyword>
<keyword id="KW-1185">Reference proteome</keyword>
<keyword id="KW-0744">Spermatogenesis</keyword>
<dbReference type="EMBL" id="AY633742">
    <property type="protein sequence ID" value="AAT47121.1"/>
    <property type="molecule type" value="mRNA"/>
</dbReference>
<dbReference type="RefSeq" id="NP_001004273.1">
    <property type="nucleotide sequence ID" value="NM_001004273.2"/>
</dbReference>
<dbReference type="RefSeq" id="XP_017459590.1">
    <property type="nucleotide sequence ID" value="XM_017604101.1"/>
</dbReference>
<dbReference type="SMR" id="Q6GVH5"/>
<dbReference type="FunCoup" id="Q6GVH5">
    <property type="interactions" value="3783"/>
</dbReference>
<dbReference type="STRING" id="10116.ENSRNOP00000073773"/>
<dbReference type="PhosphoSitePlus" id="Q6GVH5"/>
<dbReference type="PaxDb" id="10116-ENSRNOP00000049469"/>
<dbReference type="GeneID" id="360584"/>
<dbReference type="KEGG" id="rno:360584"/>
<dbReference type="AGR" id="RGD:1302978"/>
<dbReference type="CTD" id="79893"/>
<dbReference type="RGD" id="1302978">
    <property type="gene designation" value="Ggnbp2"/>
</dbReference>
<dbReference type="VEuPathDB" id="HostDB:ENSRNOG00000027860"/>
<dbReference type="eggNOG" id="ENOG502QQ20">
    <property type="taxonomic scope" value="Eukaryota"/>
</dbReference>
<dbReference type="HOGENOM" id="CLU_024870_0_0_1"/>
<dbReference type="InParanoid" id="Q6GVH5"/>
<dbReference type="PRO" id="PR:Q6GVH5"/>
<dbReference type="Proteomes" id="UP000002494">
    <property type="component" value="Chromosome 10"/>
</dbReference>
<dbReference type="Bgee" id="ENSRNOG00000027860">
    <property type="expression patterns" value="Expressed in testis and 20 other cell types or tissues"/>
</dbReference>
<dbReference type="ExpressionAtlas" id="Q6GVH5">
    <property type="expression patterns" value="baseline and differential"/>
</dbReference>
<dbReference type="GO" id="GO:0005737">
    <property type="term" value="C:cytoplasm"/>
    <property type="evidence" value="ECO:0000266"/>
    <property type="project" value="RGD"/>
</dbReference>
<dbReference type="GO" id="GO:0031410">
    <property type="term" value="C:cytoplasmic vesicle"/>
    <property type="evidence" value="ECO:0007669"/>
    <property type="project" value="UniProtKB-KW"/>
</dbReference>
<dbReference type="GO" id="GO:0005634">
    <property type="term" value="C:nucleus"/>
    <property type="evidence" value="ECO:0000266"/>
    <property type="project" value="RGD"/>
</dbReference>
<dbReference type="GO" id="GO:0030154">
    <property type="term" value="P:cell differentiation"/>
    <property type="evidence" value="ECO:0000266"/>
    <property type="project" value="RGD"/>
</dbReference>
<dbReference type="GO" id="GO:0060716">
    <property type="term" value="P:labyrinthine layer blood vessel development"/>
    <property type="evidence" value="ECO:0000266"/>
    <property type="project" value="RGD"/>
</dbReference>
<dbReference type="GO" id="GO:0060711">
    <property type="term" value="P:labyrinthine layer development"/>
    <property type="evidence" value="ECO:0000266"/>
    <property type="project" value="RGD"/>
</dbReference>
<dbReference type="GO" id="GO:0008285">
    <property type="term" value="P:negative regulation of cell population proliferation"/>
    <property type="evidence" value="ECO:0000266"/>
    <property type="project" value="RGD"/>
</dbReference>
<dbReference type="GO" id="GO:0010629">
    <property type="term" value="P:negative regulation of gene expression"/>
    <property type="evidence" value="ECO:0000266"/>
    <property type="project" value="RGD"/>
</dbReference>
<dbReference type="GO" id="GO:1904893">
    <property type="term" value="P:negative regulation of receptor signaling pathway via STAT"/>
    <property type="evidence" value="ECO:0000266"/>
    <property type="project" value="RGD"/>
</dbReference>
<dbReference type="GO" id="GO:0007283">
    <property type="term" value="P:spermatogenesis"/>
    <property type="evidence" value="ECO:0007669"/>
    <property type="project" value="UniProtKB-KW"/>
</dbReference>
<dbReference type="InterPro" id="IPR026073">
    <property type="entry name" value="GGNBP2"/>
</dbReference>
<dbReference type="PANTHER" id="PTHR13601">
    <property type="entry name" value="GAMETOGENETIN-BINDING PROTEIN 2"/>
    <property type="match status" value="1"/>
</dbReference>
<dbReference type="PANTHER" id="PTHR13601:SF2">
    <property type="entry name" value="GAMETOGENETIN-BINDING PROTEIN 2"/>
    <property type="match status" value="1"/>
</dbReference>
<accession>Q6GVH5</accession>
<organism>
    <name type="scientific">Rattus norvegicus</name>
    <name type="common">Rat</name>
    <dbReference type="NCBI Taxonomy" id="10116"/>
    <lineage>
        <taxon>Eukaryota</taxon>
        <taxon>Metazoa</taxon>
        <taxon>Chordata</taxon>
        <taxon>Craniata</taxon>
        <taxon>Vertebrata</taxon>
        <taxon>Euteleostomi</taxon>
        <taxon>Mammalia</taxon>
        <taxon>Eutheria</taxon>
        <taxon>Euarchontoglires</taxon>
        <taxon>Glires</taxon>
        <taxon>Rodentia</taxon>
        <taxon>Myomorpha</taxon>
        <taxon>Muroidea</taxon>
        <taxon>Muridae</taxon>
        <taxon>Murinae</taxon>
        <taxon>Rattus</taxon>
    </lineage>
</organism>
<gene>
    <name type="primary">Ggnbp2</name>
    <name type="synonym">Zfp403</name>
    <name type="synonym">Znf403</name>
</gene>
<protein>
    <recommendedName>
        <fullName>Gametogenetin-binding protein 2</fullName>
    </recommendedName>
    <alternativeName>
        <fullName>Protein ZNF403</fullName>
    </alternativeName>
</protein>